<dbReference type="EC" id="2.3.2.34"/>
<dbReference type="EMBL" id="AAFI02000042">
    <property type="protein sequence ID" value="EAL66624.1"/>
    <property type="molecule type" value="Genomic_DNA"/>
</dbReference>
<dbReference type="RefSeq" id="XP_640605.1">
    <property type="nucleotide sequence ID" value="XM_635513.1"/>
</dbReference>
<dbReference type="SMR" id="Q54TI6"/>
<dbReference type="FunCoup" id="Q54TI6">
    <property type="interactions" value="797"/>
</dbReference>
<dbReference type="STRING" id="44689.Q54TI6"/>
<dbReference type="GlyGen" id="Q54TI6">
    <property type="glycosylation" value="1 site"/>
</dbReference>
<dbReference type="PaxDb" id="44689-DDB0238042"/>
<dbReference type="EnsemblProtists" id="EAL66624">
    <property type="protein sequence ID" value="EAL66624"/>
    <property type="gene ID" value="DDB_G0281725"/>
</dbReference>
<dbReference type="GeneID" id="8623215"/>
<dbReference type="KEGG" id="ddi:DDB_G0281725"/>
<dbReference type="dictyBase" id="DDB_G0281725">
    <property type="gene designation" value="ube2m"/>
</dbReference>
<dbReference type="VEuPathDB" id="AmoebaDB:DDB_G0281725"/>
<dbReference type="eggNOG" id="KOG0420">
    <property type="taxonomic scope" value="Eukaryota"/>
</dbReference>
<dbReference type="HOGENOM" id="CLU_030988_6_0_1"/>
<dbReference type="InParanoid" id="Q54TI6"/>
<dbReference type="OMA" id="CQVDFPD"/>
<dbReference type="PhylomeDB" id="Q54TI6"/>
<dbReference type="Reactome" id="R-DDI-8951664">
    <property type="pathway name" value="Neddylation"/>
</dbReference>
<dbReference type="Reactome" id="R-DDI-983168">
    <property type="pathway name" value="Antigen processing: Ubiquitination &amp; Proteasome degradation"/>
</dbReference>
<dbReference type="UniPathway" id="UPA00885"/>
<dbReference type="PRO" id="PR:Q54TI6"/>
<dbReference type="Proteomes" id="UP000002195">
    <property type="component" value="Chromosome 3"/>
</dbReference>
<dbReference type="GO" id="GO:0005829">
    <property type="term" value="C:cytosol"/>
    <property type="evidence" value="ECO:0000318"/>
    <property type="project" value="GO_Central"/>
</dbReference>
<dbReference type="GO" id="GO:0005634">
    <property type="term" value="C:nucleus"/>
    <property type="evidence" value="ECO:0000318"/>
    <property type="project" value="GO_Central"/>
</dbReference>
<dbReference type="GO" id="GO:0005524">
    <property type="term" value="F:ATP binding"/>
    <property type="evidence" value="ECO:0007669"/>
    <property type="project" value="UniProtKB-KW"/>
</dbReference>
<dbReference type="GO" id="GO:0061654">
    <property type="term" value="F:NEDD8 conjugating enzyme activity"/>
    <property type="evidence" value="ECO:0007669"/>
    <property type="project" value="UniProtKB-EC"/>
</dbReference>
<dbReference type="GO" id="GO:0019788">
    <property type="term" value="F:NEDD8 transferase activity"/>
    <property type="evidence" value="ECO:0000250"/>
    <property type="project" value="dictyBase"/>
</dbReference>
<dbReference type="GO" id="GO:0004842">
    <property type="term" value="F:ubiquitin-protein transferase activity"/>
    <property type="evidence" value="ECO:0000250"/>
    <property type="project" value="UniProtKB"/>
</dbReference>
<dbReference type="GO" id="GO:0036211">
    <property type="term" value="P:protein modification process"/>
    <property type="evidence" value="ECO:0000250"/>
    <property type="project" value="UniProtKB"/>
</dbReference>
<dbReference type="GO" id="GO:0045116">
    <property type="term" value="P:protein neddylation"/>
    <property type="evidence" value="ECO:0000250"/>
    <property type="project" value="dictyBase"/>
</dbReference>
<dbReference type="CDD" id="cd23794">
    <property type="entry name" value="UBCc_UBE2F_UBE2M"/>
    <property type="match status" value="1"/>
</dbReference>
<dbReference type="FunFam" id="3.10.110.10:FF:000005">
    <property type="entry name" value="NEDD8-conjugating enzyme Ubc12"/>
    <property type="match status" value="1"/>
</dbReference>
<dbReference type="Gene3D" id="3.10.110.10">
    <property type="entry name" value="Ubiquitin Conjugating Enzyme"/>
    <property type="match status" value="1"/>
</dbReference>
<dbReference type="InterPro" id="IPR050113">
    <property type="entry name" value="Ub_conjugating_enzyme"/>
</dbReference>
<dbReference type="InterPro" id="IPR000608">
    <property type="entry name" value="UBQ-conjugat_E2_core"/>
</dbReference>
<dbReference type="InterPro" id="IPR023313">
    <property type="entry name" value="UBQ-conjugating_AS"/>
</dbReference>
<dbReference type="InterPro" id="IPR016135">
    <property type="entry name" value="UBQ-conjugating_enzyme/RWD"/>
</dbReference>
<dbReference type="PANTHER" id="PTHR24067">
    <property type="entry name" value="UBIQUITIN-CONJUGATING ENZYME E2"/>
    <property type="match status" value="1"/>
</dbReference>
<dbReference type="Pfam" id="PF00179">
    <property type="entry name" value="UQ_con"/>
    <property type="match status" value="1"/>
</dbReference>
<dbReference type="SMART" id="SM00212">
    <property type="entry name" value="UBCc"/>
    <property type="match status" value="1"/>
</dbReference>
<dbReference type="SUPFAM" id="SSF54495">
    <property type="entry name" value="UBC-like"/>
    <property type="match status" value="1"/>
</dbReference>
<dbReference type="PROSITE" id="PS00183">
    <property type="entry name" value="UBC_1"/>
    <property type="match status" value="1"/>
</dbReference>
<dbReference type="PROSITE" id="PS50127">
    <property type="entry name" value="UBC_2"/>
    <property type="match status" value="1"/>
</dbReference>
<evidence type="ECO:0000250" key="1"/>
<evidence type="ECO:0000255" key="2">
    <source>
        <dbReference type="PROSITE-ProRule" id="PRU00388"/>
    </source>
</evidence>
<evidence type="ECO:0000255" key="3">
    <source>
        <dbReference type="PROSITE-ProRule" id="PRU10133"/>
    </source>
</evidence>
<evidence type="ECO:0000256" key="4">
    <source>
        <dbReference type="SAM" id="MobiDB-lite"/>
    </source>
</evidence>
<feature type="chain" id="PRO_0000328398" description="NEDD8-conjugating enzyme Ubc12">
    <location>
        <begin position="1"/>
        <end position="230"/>
    </location>
</feature>
<feature type="domain" description="UBC core" evidence="2">
    <location>
        <begin position="77"/>
        <end position="221"/>
    </location>
</feature>
<feature type="region of interest" description="Disordered" evidence="4">
    <location>
        <begin position="1"/>
        <end position="87"/>
    </location>
</feature>
<feature type="compositionally biased region" description="Low complexity" evidence="4">
    <location>
        <begin position="10"/>
        <end position="20"/>
    </location>
</feature>
<feature type="compositionally biased region" description="Polar residues" evidence="4">
    <location>
        <begin position="26"/>
        <end position="36"/>
    </location>
</feature>
<feature type="compositionally biased region" description="Basic and acidic residues" evidence="4">
    <location>
        <begin position="37"/>
        <end position="57"/>
    </location>
</feature>
<feature type="compositionally biased region" description="Polar residues" evidence="4">
    <location>
        <begin position="61"/>
        <end position="70"/>
    </location>
</feature>
<feature type="active site" description="Glycyl thioester intermediate" evidence="2 3">
    <location>
        <position position="159"/>
    </location>
</feature>
<keyword id="KW-0067">ATP-binding</keyword>
<keyword id="KW-0547">Nucleotide-binding</keyword>
<keyword id="KW-1185">Reference proteome</keyword>
<keyword id="KW-0808">Transferase</keyword>
<keyword id="KW-0833">Ubl conjugation pathway</keyword>
<protein>
    <recommendedName>
        <fullName>NEDD8-conjugating enzyme Ubc12</fullName>
        <ecNumber>2.3.2.34</ecNumber>
    </recommendedName>
    <alternativeName>
        <fullName>NEDD8 carrier protein</fullName>
    </alternativeName>
    <alternativeName>
        <fullName>Ubiquitin-conjugating enzyme E2M</fullName>
    </alternativeName>
</protein>
<comment type="function">
    <text evidence="1">Accepts the ubiquitin-like protein nedd8 from the uba3-nae1 E1 complex and catalyzes its covalent attachment to other proteins.</text>
</comment>
<comment type="catalytic activity">
    <reaction>
        <text>[E1 NEDD8-activating enzyme]-S-[NEDD8 protein]-yl-L-cysteine + [E2 NEDD8-conjugating enzyme]-L-cysteine = [E1 NEDD8-activating enzyme]-L-cysteine + [E2 NEDD8-conjugating enzyme]-S-[NEDD8-protein]-yl-L-cysteine.</text>
        <dbReference type="EC" id="2.3.2.34"/>
    </reaction>
</comment>
<comment type="pathway">
    <text>Protein modification; protein neddylation.</text>
</comment>
<comment type="domain">
    <text evidence="1">Both the N-terminal docking peptide and the catalytic core domain must bind the uba3-nae1 complex simultaneously for optimal transfer of nedd8.</text>
</comment>
<comment type="similarity">
    <text evidence="2">Belongs to the ubiquitin-conjugating enzyme family. UBC12 subfamily.</text>
</comment>
<name>UBC12_DICDI</name>
<sequence length="230" mass="26066">MFRLKELQKKQQQQQQQQQQAAAPATNGTDAVTTEPTDVKRQNSNDLKEIRKQKSKDSYFSLKTKQSSESGSKRANPAELRAQKDIDEMEVPTGCAVSFKDTNDILNFNLSITPTDGLYQSATFQFTINIPSTYPYDPPKVHCDTLVYHPNIDLEGHVCLNILRQDWMPVLNIGTVIFGLMTLFLEPNPDDPLNKDAAQLMIDNKKTFEANVRQSLRGGYISNRQFPKLL</sequence>
<gene>
    <name type="primary">ube2m</name>
    <name type="ORF">DDB_G0281725</name>
</gene>
<organism>
    <name type="scientific">Dictyostelium discoideum</name>
    <name type="common">Social amoeba</name>
    <dbReference type="NCBI Taxonomy" id="44689"/>
    <lineage>
        <taxon>Eukaryota</taxon>
        <taxon>Amoebozoa</taxon>
        <taxon>Evosea</taxon>
        <taxon>Eumycetozoa</taxon>
        <taxon>Dictyostelia</taxon>
        <taxon>Dictyosteliales</taxon>
        <taxon>Dictyosteliaceae</taxon>
        <taxon>Dictyostelium</taxon>
    </lineage>
</organism>
<reference key="1">
    <citation type="journal article" date="2005" name="Nature">
        <title>The genome of the social amoeba Dictyostelium discoideum.</title>
        <authorList>
            <person name="Eichinger L."/>
            <person name="Pachebat J.A."/>
            <person name="Gloeckner G."/>
            <person name="Rajandream M.A."/>
            <person name="Sucgang R."/>
            <person name="Berriman M."/>
            <person name="Song J."/>
            <person name="Olsen R."/>
            <person name="Szafranski K."/>
            <person name="Xu Q."/>
            <person name="Tunggal B."/>
            <person name="Kummerfeld S."/>
            <person name="Madera M."/>
            <person name="Konfortov B.A."/>
            <person name="Rivero F."/>
            <person name="Bankier A.T."/>
            <person name="Lehmann R."/>
            <person name="Hamlin N."/>
            <person name="Davies R."/>
            <person name="Gaudet P."/>
            <person name="Fey P."/>
            <person name="Pilcher K."/>
            <person name="Chen G."/>
            <person name="Saunders D."/>
            <person name="Sodergren E.J."/>
            <person name="Davis P."/>
            <person name="Kerhornou A."/>
            <person name="Nie X."/>
            <person name="Hall N."/>
            <person name="Anjard C."/>
            <person name="Hemphill L."/>
            <person name="Bason N."/>
            <person name="Farbrother P."/>
            <person name="Desany B."/>
            <person name="Just E."/>
            <person name="Morio T."/>
            <person name="Rost R."/>
            <person name="Churcher C.M."/>
            <person name="Cooper J."/>
            <person name="Haydock S."/>
            <person name="van Driessche N."/>
            <person name="Cronin A."/>
            <person name="Goodhead I."/>
            <person name="Muzny D.M."/>
            <person name="Mourier T."/>
            <person name="Pain A."/>
            <person name="Lu M."/>
            <person name="Harper D."/>
            <person name="Lindsay R."/>
            <person name="Hauser H."/>
            <person name="James K.D."/>
            <person name="Quiles M."/>
            <person name="Madan Babu M."/>
            <person name="Saito T."/>
            <person name="Buchrieser C."/>
            <person name="Wardroper A."/>
            <person name="Felder M."/>
            <person name="Thangavelu M."/>
            <person name="Johnson D."/>
            <person name="Knights A."/>
            <person name="Loulseged H."/>
            <person name="Mungall K.L."/>
            <person name="Oliver K."/>
            <person name="Price C."/>
            <person name="Quail M.A."/>
            <person name="Urushihara H."/>
            <person name="Hernandez J."/>
            <person name="Rabbinowitsch E."/>
            <person name="Steffen D."/>
            <person name="Sanders M."/>
            <person name="Ma J."/>
            <person name="Kohara Y."/>
            <person name="Sharp S."/>
            <person name="Simmonds M.N."/>
            <person name="Spiegler S."/>
            <person name="Tivey A."/>
            <person name="Sugano S."/>
            <person name="White B."/>
            <person name="Walker D."/>
            <person name="Woodward J.R."/>
            <person name="Winckler T."/>
            <person name="Tanaka Y."/>
            <person name="Shaulsky G."/>
            <person name="Schleicher M."/>
            <person name="Weinstock G.M."/>
            <person name="Rosenthal A."/>
            <person name="Cox E.C."/>
            <person name="Chisholm R.L."/>
            <person name="Gibbs R.A."/>
            <person name="Loomis W.F."/>
            <person name="Platzer M."/>
            <person name="Kay R.R."/>
            <person name="Williams J.G."/>
            <person name="Dear P.H."/>
            <person name="Noegel A.A."/>
            <person name="Barrell B.G."/>
            <person name="Kuspa A."/>
        </authorList>
    </citation>
    <scope>NUCLEOTIDE SEQUENCE [LARGE SCALE GENOMIC DNA]</scope>
    <source>
        <strain>AX4</strain>
    </source>
</reference>
<proteinExistence type="inferred from homology"/>
<accession>Q54TI6</accession>